<sequence length="190" mass="20107">MTERIGPGAFVAVVGASGVGKDALMAYARERSEAVAHFPRRVITRPSGPGEDHEPVTEEQFTAARERGELAVWWPAHGLRYGIPASADVAVGAGRVVVANVSRAVLDELAGRYQRLVVVRVTVSDEVRAQRLRARGREPEPGIGQRLARPDPAPGHQADTVIQNDGTLADGGDQLLRVILDAAGAPLATG</sequence>
<proteinExistence type="inferred from homology"/>
<organism>
    <name type="scientific">Pseudofrankia inefficax (strain DSM 45817 / CECT 9037 / DDB 130130 / EuI1c)</name>
    <name type="common">Frankia inefficax</name>
    <dbReference type="NCBI Taxonomy" id="298654"/>
    <lineage>
        <taxon>Bacteria</taxon>
        <taxon>Bacillati</taxon>
        <taxon>Actinomycetota</taxon>
        <taxon>Actinomycetes</taxon>
        <taxon>Frankiales</taxon>
        <taxon>Frankiaceae</taxon>
        <taxon>Pseudofrankia</taxon>
    </lineage>
</organism>
<comment type="function">
    <text evidence="1">Catalyzes the phosphorylation of ribose 1,5-bisphosphate to 5-phospho-D-ribosyl alpha-1-diphosphate (PRPP).</text>
</comment>
<comment type="catalytic activity">
    <reaction evidence="1">
        <text>alpha-D-ribose 1,5-bisphosphate + ATP = 5-phospho-alpha-D-ribose 1-diphosphate + ADP</text>
        <dbReference type="Rhea" id="RHEA:20109"/>
        <dbReference type="ChEBI" id="CHEBI:30616"/>
        <dbReference type="ChEBI" id="CHEBI:58017"/>
        <dbReference type="ChEBI" id="CHEBI:68688"/>
        <dbReference type="ChEBI" id="CHEBI:456216"/>
        <dbReference type="EC" id="2.7.4.23"/>
    </reaction>
</comment>
<comment type="pathway">
    <text evidence="1">Metabolic intermediate biosynthesis; 5-phospho-alpha-D-ribose 1-diphosphate biosynthesis; 5-phospho-alpha-D-ribose 1-diphosphate from D-ribose 5-phosphate (route II): step 3/3.</text>
</comment>
<comment type="similarity">
    <text evidence="1">Belongs to the ribose 1,5-bisphosphokinase family.</text>
</comment>
<reference key="1">
    <citation type="submission" date="2010-10" db="EMBL/GenBank/DDBJ databases">
        <title>Complete sequence of Frankia sp. EuI1c.</title>
        <authorList>
            <consortium name="US DOE Joint Genome Institute"/>
            <person name="Lucas S."/>
            <person name="Copeland A."/>
            <person name="Lapidus A."/>
            <person name="Cheng J.-F."/>
            <person name="Bruce D."/>
            <person name="Goodwin L."/>
            <person name="Pitluck S."/>
            <person name="Chertkov O."/>
            <person name="Detter J.C."/>
            <person name="Han C."/>
            <person name="Tapia R."/>
            <person name="Land M."/>
            <person name="Hauser L."/>
            <person name="Jeffries C."/>
            <person name="Kyrpides N."/>
            <person name="Ivanova N."/>
            <person name="Mikhailova N."/>
            <person name="Beauchemin N."/>
            <person name="Sen A."/>
            <person name="Sur S.A."/>
            <person name="Gtari M."/>
            <person name="Wall L."/>
            <person name="Tisa L."/>
            <person name="Woyke T."/>
        </authorList>
    </citation>
    <scope>NUCLEOTIDE SEQUENCE [LARGE SCALE GENOMIC DNA]</scope>
    <source>
        <strain>DSM 45817 / CECT 9037 / DDB 130130 / EuI1c</strain>
    </source>
</reference>
<feature type="chain" id="PRO_0000412786" description="Ribose 1,5-bisphosphate phosphokinase PhnN">
    <location>
        <begin position="1"/>
        <end position="190"/>
    </location>
</feature>
<feature type="region of interest" description="Disordered" evidence="2">
    <location>
        <begin position="135"/>
        <end position="159"/>
    </location>
</feature>
<accession>E3J0E1</accession>
<name>PHNN_PSEI1</name>
<dbReference type="EC" id="2.7.4.23" evidence="1"/>
<dbReference type="EMBL" id="CP002299">
    <property type="protein sequence ID" value="ADP81570.1"/>
    <property type="molecule type" value="Genomic_DNA"/>
</dbReference>
<dbReference type="RefSeq" id="WP_013424688.1">
    <property type="nucleotide sequence ID" value="NC_014666.1"/>
</dbReference>
<dbReference type="SMR" id="E3J0E1"/>
<dbReference type="STRING" id="298654.FraEuI1c_3563"/>
<dbReference type="KEGG" id="fri:FraEuI1c_3563"/>
<dbReference type="eggNOG" id="COG3709">
    <property type="taxonomic scope" value="Bacteria"/>
</dbReference>
<dbReference type="HOGENOM" id="CLU_102477_0_0_11"/>
<dbReference type="InParanoid" id="E3J0E1"/>
<dbReference type="OrthoDB" id="341217at2"/>
<dbReference type="UniPathway" id="UPA00087">
    <property type="reaction ID" value="UER00175"/>
</dbReference>
<dbReference type="Proteomes" id="UP000002484">
    <property type="component" value="Chromosome"/>
</dbReference>
<dbReference type="GO" id="GO:0005524">
    <property type="term" value="F:ATP binding"/>
    <property type="evidence" value="ECO:0007669"/>
    <property type="project" value="UniProtKB-KW"/>
</dbReference>
<dbReference type="GO" id="GO:0033863">
    <property type="term" value="F:ribose 1,5-bisphosphate phosphokinase activity"/>
    <property type="evidence" value="ECO:0007669"/>
    <property type="project" value="UniProtKB-UniRule"/>
</dbReference>
<dbReference type="GO" id="GO:0006015">
    <property type="term" value="P:5-phosphoribose 1-diphosphate biosynthetic process"/>
    <property type="evidence" value="ECO:0007669"/>
    <property type="project" value="UniProtKB-UniRule"/>
</dbReference>
<dbReference type="GO" id="GO:0019634">
    <property type="term" value="P:organic phosphonate metabolic process"/>
    <property type="evidence" value="ECO:0007669"/>
    <property type="project" value="UniProtKB-UniRule"/>
</dbReference>
<dbReference type="Gene3D" id="3.40.50.300">
    <property type="entry name" value="P-loop containing nucleotide triphosphate hydrolases"/>
    <property type="match status" value="1"/>
</dbReference>
<dbReference type="HAMAP" id="MF_00836">
    <property type="entry name" value="PhnN"/>
    <property type="match status" value="1"/>
</dbReference>
<dbReference type="InterPro" id="IPR008145">
    <property type="entry name" value="GK/Ca_channel_bsu"/>
</dbReference>
<dbReference type="InterPro" id="IPR027417">
    <property type="entry name" value="P-loop_NTPase"/>
</dbReference>
<dbReference type="InterPro" id="IPR012699">
    <property type="entry name" value="PhnN"/>
</dbReference>
<dbReference type="NCBIfam" id="TIGR02322">
    <property type="entry name" value="phosphon_PhnN"/>
    <property type="match status" value="1"/>
</dbReference>
<dbReference type="SMART" id="SM00072">
    <property type="entry name" value="GuKc"/>
    <property type="match status" value="1"/>
</dbReference>
<dbReference type="SUPFAM" id="SSF52540">
    <property type="entry name" value="P-loop containing nucleoside triphosphate hydrolases"/>
    <property type="match status" value="1"/>
</dbReference>
<evidence type="ECO:0000255" key="1">
    <source>
        <dbReference type="HAMAP-Rule" id="MF_00836"/>
    </source>
</evidence>
<evidence type="ECO:0000256" key="2">
    <source>
        <dbReference type="SAM" id="MobiDB-lite"/>
    </source>
</evidence>
<protein>
    <recommendedName>
        <fullName evidence="1">Ribose 1,5-bisphosphate phosphokinase PhnN</fullName>
        <ecNumber evidence="1">2.7.4.23</ecNumber>
    </recommendedName>
    <alternativeName>
        <fullName evidence="1">Ribose 1,5-bisphosphokinase</fullName>
    </alternativeName>
</protein>
<gene>
    <name evidence="1" type="primary">phnN</name>
    <name type="ordered locus">FraEuI1c_3563</name>
</gene>
<keyword id="KW-0067">ATP-binding</keyword>
<keyword id="KW-0547">Nucleotide-binding</keyword>
<keyword id="KW-1185">Reference proteome</keyword>
<keyword id="KW-0808">Transferase</keyword>